<dbReference type="EC" id="7.1.1.-" evidence="1"/>
<dbReference type="EMBL" id="AE005673">
    <property type="protein sequence ID" value="AAK23915.1"/>
    <property type="molecule type" value="Genomic_DNA"/>
</dbReference>
<dbReference type="PIR" id="G87489">
    <property type="entry name" value="G87489"/>
</dbReference>
<dbReference type="RefSeq" id="NP_420747.1">
    <property type="nucleotide sequence ID" value="NC_002696.2"/>
</dbReference>
<dbReference type="RefSeq" id="WP_010919806.1">
    <property type="nucleotide sequence ID" value="NC_002696.2"/>
</dbReference>
<dbReference type="SMR" id="Q9A6Y6"/>
<dbReference type="STRING" id="190650.CC_1940"/>
<dbReference type="EnsemblBacteria" id="AAK23915">
    <property type="protein sequence ID" value="AAK23915"/>
    <property type="gene ID" value="CC_1940"/>
</dbReference>
<dbReference type="KEGG" id="ccr:CC_1940"/>
<dbReference type="PATRIC" id="fig|190650.5.peg.1957"/>
<dbReference type="eggNOG" id="COG0713">
    <property type="taxonomic scope" value="Bacteria"/>
</dbReference>
<dbReference type="HOGENOM" id="CLU_144724_2_0_5"/>
<dbReference type="BioCyc" id="CAULO:CC1940-MONOMER"/>
<dbReference type="Proteomes" id="UP000001816">
    <property type="component" value="Chromosome"/>
</dbReference>
<dbReference type="GO" id="GO:0030964">
    <property type="term" value="C:NADH dehydrogenase complex"/>
    <property type="evidence" value="ECO:0007669"/>
    <property type="project" value="TreeGrafter"/>
</dbReference>
<dbReference type="GO" id="GO:0005886">
    <property type="term" value="C:plasma membrane"/>
    <property type="evidence" value="ECO:0007669"/>
    <property type="project" value="UniProtKB-SubCell"/>
</dbReference>
<dbReference type="GO" id="GO:0050136">
    <property type="term" value="F:NADH:ubiquinone reductase (non-electrogenic) activity"/>
    <property type="evidence" value="ECO:0007669"/>
    <property type="project" value="UniProtKB-UniRule"/>
</dbReference>
<dbReference type="GO" id="GO:0048038">
    <property type="term" value="F:quinone binding"/>
    <property type="evidence" value="ECO:0007669"/>
    <property type="project" value="UniProtKB-KW"/>
</dbReference>
<dbReference type="GO" id="GO:0042773">
    <property type="term" value="P:ATP synthesis coupled electron transport"/>
    <property type="evidence" value="ECO:0007669"/>
    <property type="project" value="InterPro"/>
</dbReference>
<dbReference type="FunFam" id="1.10.287.3510:FF:000001">
    <property type="entry name" value="NADH-quinone oxidoreductase subunit K"/>
    <property type="match status" value="1"/>
</dbReference>
<dbReference type="Gene3D" id="1.10.287.3510">
    <property type="match status" value="1"/>
</dbReference>
<dbReference type="HAMAP" id="MF_01456">
    <property type="entry name" value="NDH1_NuoK"/>
    <property type="match status" value="1"/>
</dbReference>
<dbReference type="InterPro" id="IPR001133">
    <property type="entry name" value="NADH_UbQ_OxRdtase_chain4L/K"/>
</dbReference>
<dbReference type="InterPro" id="IPR039428">
    <property type="entry name" value="NUOK/Mnh_C1-like"/>
</dbReference>
<dbReference type="NCBIfam" id="NF004320">
    <property type="entry name" value="PRK05715.1-2"/>
    <property type="match status" value="1"/>
</dbReference>
<dbReference type="NCBIfam" id="NF004321">
    <property type="entry name" value="PRK05715.1-3"/>
    <property type="match status" value="1"/>
</dbReference>
<dbReference type="NCBIfam" id="NF004323">
    <property type="entry name" value="PRK05715.1-5"/>
    <property type="match status" value="1"/>
</dbReference>
<dbReference type="PANTHER" id="PTHR11434:SF21">
    <property type="entry name" value="NADH DEHYDROGENASE SUBUNIT 4L-RELATED"/>
    <property type="match status" value="1"/>
</dbReference>
<dbReference type="PANTHER" id="PTHR11434">
    <property type="entry name" value="NADH-UBIQUINONE OXIDOREDUCTASE SUBUNIT ND4L"/>
    <property type="match status" value="1"/>
</dbReference>
<dbReference type="Pfam" id="PF00420">
    <property type="entry name" value="Oxidored_q2"/>
    <property type="match status" value="1"/>
</dbReference>
<keyword id="KW-0997">Cell inner membrane</keyword>
<keyword id="KW-1003">Cell membrane</keyword>
<keyword id="KW-0472">Membrane</keyword>
<keyword id="KW-0520">NAD</keyword>
<keyword id="KW-0874">Quinone</keyword>
<keyword id="KW-1185">Reference proteome</keyword>
<keyword id="KW-1278">Translocase</keyword>
<keyword id="KW-0812">Transmembrane</keyword>
<keyword id="KW-1133">Transmembrane helix</keyword>
<keyword id="KW-0813">Transport</keyword>
<keyword id="KW-0830">Ubiquinone</keyword>
<protein>
    <recommendedName>
        <fullName evidence="1">NADH-quinone oxidoreductase subunit K</fullName>
        <ecNumber evidence="1">7.1.1.-</ecNumber>
    </recommendedName>
    <alternativeName>
        <fullName evidence="1">NADH dehydrogenase I subunit K</fullName>
    </alternativeName>
    <alternativeName>
        <fullName evidence="1">NDH-1 subunit K</fullName>
    </alternativeName>
</protein>
<organism>
    <name type="scientific">Caulobacter vibrioides (strain ATCC 19089 / CIP 103742 / CB 15)</name>
    <name type="common">Caulobacter crescentus</name>
    <dbReference type="NCBI Taxonomy" id="190650"/>
    <lineage>
        <taxon>Bacteria</taxon>
        <taxon>Pseudomonadati</taxon>
        <taxon>Pseudomonadota</taxon>
        <taxon>Alphaproteobacteria</taxon>
        <taxon>Caulobacterales</taxon>
        <taxon>Caulobacteraceae</taxon>
        <taxon>Caulobacter</taxon>
    </lineage>
</organism>
<gene>
    <name evidence="1" type="primary">nuoK</name>
    <name type="ordered locus">CC_1940</name>
</gene>
<evidence type="ECO:0000255" key="1">
    <source>
        <dbReference type="HAMAP-Rule" id="MF_01456"/>
    </source>
</evidence>
<accession>Q9A6Y6</accession>
<feature type="chain" id="PRO_0000390007" description="NADH-quinone oxidoreductase subunit K">
    <location>
        <begin position="1"/>
        <end position="101"/>
    </location>
</feature>
<feature type="transmembrane region" description="Helical" evidence="1">
    <location>
        <begin position="4"/>
        <end position="24"/>
    </location>
</feature>
<feature type="transmembrane region" description="Helical" evidence="1">
    <location>
        <begin position="30"/>
        <end position="50"/>
    </location>
</feature>
<feature type="transmembrane region" description="Helical" evidence="1">
    <location>
        <begin position="61"/>
        <end position="81"/>
    </location>
</feature>
<reference key="1">
    <citation type="journal article" date="2001" name="Proc. Natl. Acad. Sci. U.S.A.">
        <title>Complete genome sequence of Caulobacter crescentus.</title>
        <authorList>
            <person name="Nierman W.C."/>
            <person name="Feldblyum T.V."/>
            <person name="Laub M.T."/>
            <person name="Paulsen I.T."/>
            <person name="Nelson K.E."/>
            <person name="Eisen J.A."/>
            <person name="Heidelberg J.F."/>
            <person name="Alley M.R.K."/>
            <person name="Ohta N."/>
            <person name="Maddock J.R."/>
            <person name="Potocka I."/>
            <person name="Nelson W.C."/>
            <person name="Newton A."/>
            <person name="Stephens C."/>
            <person name="Phadke N.D."/>
            <person name="Ely B."/>
            <person name="DeBoy R.T."/>
            <person name="Dodson R.J."/>
            <person name="Durkin A.S."/>
            <person name="Gwinn M.L."/>
            <person name="Haft D.H."/>
            <person name="Kolonay J.F."/>
            <person name="Smit J."/>
            <person name="Craven M.B."/>
            <person name="Khouri H.M."/>
            <person name="Shetty J."/>
            <person name="Berry K.J."/>
            <person name="Utterback T.R."/>
            <person name="Tran K."/>
            <person name="Wolf A.M."/>
            <person name="Vamathevan J.J."/>
            <person name="Ermolaeva M.D."/>
            <person name="White O."/>
            <person name="Salzberg S.L."/>
            <person name="Venter J.C."/>
            <person name="Shapiro L."/>
            <person name="Fraser C.M."/>
        </authorList>
    </citation>
    <scope>NUCLEOTIDE SEQUENCE [LARGE SCALE GENOMIC DNA]</scope>
    <source>
        <strain>ATCC 19089 / CIP 103742 / CB 15</strain>
    </source>
</reference>
<comment type="function">
    <text evidence="1">NDH-1 shuttles electrons from NADH, via FMN and iron-sulfur (Fe-S) centers, to quinones in the respiratory chain. The immediate electron acceptor for the enzyme in this species is believed to be ubiquinone. Couples the redox reaction to proton translocation (for every two electrons transferred, four hydrogen ions are translocated across the cytoplasmic membrane), and thus conserves the redox energy in a proton gradient.</text>
</comment>
<comment type="catalytic activity">
    <reaction evidence="1">
        <text>a quinone + NADH + 5 H(+)(in) = a quinol + NAD(+) + 4 H(+)(out)</text>
        <dbReference type="Rhea" id="RHEA:57888"/>
        <dbReference type="ChEBI" id="CHEBI:15378"/>
        <dbReference type="ChEBI" id="CHEBI:24646"/>
        <dbReference type="ChEBI" id="CHEBI:57540"/>
        <dbReference type="ChEBI" id="CHEBI:57945"/>
        <dbReference type="ChEBI" id="CHEBI:132124"/>
    </reaction>
</comment>
<comment type="subunit">
    <text evidence="1">NDH-1 is composed of 14 different subunits. Subunits NuoA, H, J, K, L, M, N constitute the membrane sector of the complex.</text>
</comment>
<comment type="subcellular location">
    <subcellularLocation>
        <location evidence="1">Cell inner membrane</location>
        <topology evidence="1">Multi-pass membrane protein</topology>
    </subcellularLocation>
</comment>
<comment type="similarity">
    <text evidence="1">Belongs to the complex I subunit 4L family.</text>
</comment>
<proteinExistence type="inferred from homology"/>
<name>NUOK_CAUVC</name>
<sequence length="101" mass="10825">MIGLPHYLVVAAILFTIGVFGIFVNRKNVIVILMSIELILLAVNINLVAFSAYLHDVAGQIFAMFVLTVAAAEAAVGLAILVTFFRNRGDIAVDDASMMKG</sequence>